<dbReference type="EMBL" id="J03359">
    <property type="protein sequence ID" value="AAA24993.1"/>
    <property type="molecule type" value="Genomic_DNA"/>
</dbReference>
<dbReference type="EMBL" id="A09003">
    <property type="protein sequence ID" value="CAA00819.1"/>
    <property type="molecule type" value="Unassigned_DNA"/>
</dbReference>
<dbReference type="PIR" id="A30542">
    <property type="entry name" value="A30542"/>
</dbReference>
<dbReference type="RefSeq" id="WP_015701411.1">
    <property type="nucleotide sequence ID" value="NZ_VOFX01000004.1"/>
</dbReference>
<dbReference type="SMR" id="P20149"/>
<dbReference type="GO" id="GO:0009279">
    <property type="term" value="C:cell outer membrane"/>
    <property type="evidence" value="ECO:0007669"/>
    <property type="project" value="UniProtKB-SubCell"/>
</dbReference>
<dbReference type="GO" id="GO:0046930">
    <property type="term" value="C:pore complex"/>
    <property type="evidence" value="ECO:0007669"/>
    <property type="project" value="UniProtKB-KW"/>
</dbReference>
<dbReference type="GO" id="GO:0015288">
    <property type="term" value="F:porin activity"/>
    <property type="evidence" value="ECO:0007669"/>
    <property type="project" value="UniProtKB-KW"/>
</dbReference>
<dbReference type="GO" id="GO:0006811">
    <property type="term" value="P:monoatomic ion transport"/>
    <property type="evidence" value="ECO:0007669"/>
    <property type="project" value="UniProtKB-KW"/>
</dbReference>
<dbReference type="CDD" id="cd00342">
    <property type="entry name" value="gram_neg_porins"/>
    <property type="match status" value="1"/>
</dbReference>
<dbReference type="Gene3D" id="2.40.160.10">
    <property type="entry name" value="Porin"/>
    <property type="match status" value="1"/>
</dbReference>
<dbReference type="InterPro" id="IPR050298">
    <property type="entry name" value="Gram-neg_bact_OMP"/>
</dbReference>
<dbReference type="InterPro" id="IPR033900">
    <property type="entry name" value="Gram_neg_porin_domain"/>
</dbReference>
<dbReference type="InterPro" id="IPR023614">
    <property type="entry name" value="Porin_dom_sf"/>
</dbReference>
<dbReference type="PANTHER" id="PTHR34501:SF2">
    <property type="entry name" value="OUTER MEMBRANE PORIN F-RELATED"/>
    <property type="match status" value="1"/>
</dbReference>
<dbReference type="PANTHER" id="PTHR34501">
    <property type="entry name" value="PROTEIN YDDL-RELATED"/>
    <property type="match status" value="1"/>
</dbReference>
<dbReference type="Pfam" id="PF13609">
    <property type="entry name" value="Porin_4"/>
    <property type="match status" value="1"/>
</dbReference>
<dbReference type="SUPFAM" id="SSF56935">
    <property type="entry name" value="Porins"/>
    <property type="match status" value="1"/>
</dbReference>
<comment type="function">
    <text evidence="1">Forms pores that allow passive diffusion of small molecules across the outer membrane.</text>
</comment>
<comment type="subunit">
    <text evidence="1">Homotrimer.</text>
</comment>
<comment type="subcellular location">
    <subcellularLocation>
        <location>Cell outer membrane</location>
        <topology>Multi-pass membrane protein</topology>
    </subcellularLocation>
</comment>
<comment type="similarity">
    <text evidence="2">Belongs to the Gram-negative porin family.</text>
</comment>
<organism>
    <name type="scientific">Haemophilus influenzae</name>
    <dbReference type="NCBI Taxonomy" id="727"/>
    <lineage>
        <taxon>Bacteria</taxon>
        <taxon>Pseudomonadati</taxon>
        <taxon>Pseudomonadota</taxon>
        <taxon>Gammaproteobacteria</taxon>
        <taxon>Pasteurellales</taxon>
        <taxon>Pasteurellaceae</taxon>
        <taxon>Haemophilus</taxon>
    </lineage>
</organism>
<feature type="signal peptide">
    <location>
        <begin position="1"/>
        <end position="20"/>
    </location>
</feature>
<feature type="chain" id="PRO_0000025259" description="Outer membrane protein P2">
    <location>
        <begin position="21"/>
        <end position="361"/>
    </location>
</feature>
<proteinExistence type="inferred from homology"/>
<evidence type="ECO:0000250" key="1"/>
<evidence type="ECO:0000305" key="2"/>
<sequence>MKKTLAALIVGAFAASAANAAVVYNNEGTNVELGGRLSIIAEQSNSTVDNQKQQHGALRNQGSRFHIKATHNFGDGFYAQGYLETRFVTKASENGSDNFGDITSKYAYVTLGNKAFGEVKLGRAKTIADGITSAEDKEYGVLNNSDYIPTSGNTVGYTFKGIDGLVLGANYLLAQKREGAKGENKRPNDKAGEVRIGEINNGIQVGAKYDANDIVAKIAYGRTNYKYNESDEHKQQLNGVLATLGYRFSDLGLLVSLDSGYAKTKNYKIKHEKRYFVSPGFQYELMEDTNVYGNFKYERTSVDQGEKTREQAVLFGVDHKLHKQLLTYIEGAYARTRTTETGKGVKTEKEKSVGVGLRVYF</sequence>
<protein>
    <recommendedName>
        <fullName>Outer membrane protein P2</fullName>
        <shortName>OMP P2</shortName>
    </recommendedName>
</protein>
<reference key="1">
    <citation type="journal article" date="1989" name="Infect. Immun.">
        <title>Molecular cloning, expression, and primary sequence of outer membrane protein P2 of Haemophilus influenzae type b.</title>
        <authorList>
            <person name="Munson R.S. Jr."/>
            <person name="Tolan R.W. Jr."/>
        </authorList>
    </citation>
    <scope>NUCLEOTIDE SEQUENCE [GENOMIC DNA]</scope>
    <source>
        <strain>Serotype B</strain>
    </source>
</reference>
<reference key="2">
    <citation type="journal article" date="1989" name="Mol. Microbiol.">
        <title>Diversity of the outer membrane protein P2 gene from major clones of Haemophilus influenzae type b.</title>
        <authorList>
            <person name="Munson R.S. Jr."/>
            <person name="Bailey C."/>
            <person name="Grass S."/>
        </authorList>
    </citation>
    <scope>NUCLEOTIDE SEQUENCE [GENOMIC DNA]</scope>
    <source>
        <strain>Serotype B</strain>
    </source>
</reference>
<reference key="3">
    <citation type="journal article" date="1989" name="Infect. Immun.">
        <title>Primary structure of the porin protein of Haemophilus influenzae type b determined by nucleotide sequence analysis.</title>
        <authorList>
            <person name="Hansen E.J."/>
            <person name="Hasemann C."/>
            <person name="Clausell A."/>
            <person name="Capra J.D."/>
            <person name="Orth K."/>
            <person name="Moomaw C.R."/>
            <person name="Slaughter C.A."/>
            <person name="Latimer J.L."/>
            <person name="Miller E.E."/>
        </authorList>
    </citation>
    <scope>NUCLEOTIDE SEQUENCE [GENOMIC DNA]</scope>
    <source>
        <strain>Serotype B</strain>
    </source>
</reference>
<name>OPP22_HAEIF</name>
<accession>P20149</accession>
<gene>
    <name type="primary">ompP2</name>
</gene>
<keyword id="KW-0998">Cell outer membrane</keyword>
<keyword id="KW-0406">Ion transport</keyword>
<keyword id="KW-0472">Membrane</keyword>
<keyword id="KW-0626">Porin</keyword>
<keyword id="KW-0732">Signal</keyword>
<keyword id="KW-0812">Transmembrane</keyword>
<keyword id="KW-1134">Transmembrane beta strand</keyword>
<keyword id="KW-0813">Transport</keyword>